<comment type="function">
    <text evidence="1 6 7 8 9 12">NADP-dependent dehydrogenase; part of the gene cluster that mediates the biosynthesis of squalestatin S1 (SQS1, also known as zaragozic acid A), a heavily oxidized fungal polyketide that offers potent cholesterol lowering activity by targeting squalene synthase (SS) (PubMed:27056201). SQS1 is composed of a 2,8-dioxobicyclic[3.2.1]octane-3,4,5-tricarboxyclic acid core that is connected to two lipophilic polyketide arms (PubMed:27056201). These initial steps feature the priming of an unusual benzoic acid starter unit onto the highly reducing polyketide synthase pks2, followed by oxaloacetate extension and product release to generate a tricarboxylic acid containing product (By similarity). The phenylalanine ammonia lyase (PAL) M7 and the acyl-CoA ligase M9 are involved in transforming phenylalanine into benzoyl-CoA (By similarity). The citrate synthase-like protein R3 is involved in connecting the C-alpha-carbons of the hexaketide chain and oxaloacetate to afford the tricarboxylic acid unit (By similarity). The potential hydrolytic enzymes, M8 and M10, are in close proximity to pks2 and may participate in product release (By similarity). On the other side, the tetraketide arm is synthesized by a the squalestatin tetraketide synthase pks1 and enzymatically esterified to the core in the last biosynthetic step, by the acetyltransferase M4 (PubMed:11251290, PubMed:15489970, PubMed:28106181). The biosynthesis of the tetraketide must involve 3 rounds of chain extension (PubMed:11251290, PubMed:15489970, PubMed:28106181). After the first and second rounds methyl-transfer occurs, and in all rounds of extension the ketoreductase and dehydratase are active (PubMed:11251290, PubMed:15489970, PubMed:28106181). The enoyl reductase and C-MeT of pks1 are not active in the final round of extension (PubMed:11251290, PubMed:15489970, PubMed:28106181). The acetyltransferase M4 appears to have a broad substrate selectivity for its acyl CoA substrate, allowing the in vitro synthesis of novel squalestatins (Probable). The biosynthesis of SQS1 requires several oxidative steps likely performed by oxidoreductases M1, R1 and R2 (Probable). Finally, in support of the identification of the cluster as being responsible for SQS1 production, the cluster contains a gene encoding a putative squalene synthase (SS) R6, suggesting a likely mechanism for self-resistance (Probable).</text>
</comment>
<comment type="pathway">
    <text evidence="12">Secondary metabolite biosynthesis.</text>
</comment>
<comment type="subunit">
    <text evidence="4">Homodimer.</text>
</comment>
<comment type="subcellular location">
    <subcellularLocation>
        <location evidence="4">Cytoplasm</location>
        <location evidence="4">Cytosol</location>
    </subcellularLocation>
</comment>
<comment type="induction">
    <text evidence="8">Expression is induced on squalestatin S1-producing YMG medium.</text>
</comment>
<comment type="similarity">
    <text evidence="11">Belongs to the short-chain dehydrogenases/reductases (SDR) family.</text>
</comment>
<keyword id="KW-0963">Cytoplasm</keyword>
<keyword id="KW-0521">NADP</keyword>
<keyword id="KW-0560">Oxidoreductase</keyword>
<sequence>MAATNDPELTRRKQRQEDFLRGTSKINFDDHIDHCVLSGKTAIVTGGASGIGHGIAQALSSNGCKVAVLDLSGPLEAGTDESNIDSPKLFECDVSSWESLLAAFQEVLIWSGNSLDIVVLSAGVRSHNIKDLILERPAGSTSTPVKPPSSVFDVNLLGTYYSAYLALWYFTNLEAKRDEAEFNWKPQLLFIGSLASYVEQPLSADYCASKHGVRGLWKSVRSHSALFGDCQTNLLAPTFIDNRQGSTKSRGDGALISLTNDVKLGEVSDVVAGALRCLCDRNIEGRALCCVKGEQSSPGSNNFDLCDNLIDFNAGKSVLDSFRNGVVGRLGTQNTTGPQ</sequence>
<protein>
    <recommendedName>
        <fullName evidence="10">NADP-dependent dehydrogenase M3</fullName>
        <ecNumber evidence="12">1.1.1.-</ecNumber>
    </recommendedName>
    <alternativeName>
        <fullName evidence="10">Squalestatin S1 biosynthesis cluster protein M3</fullName>
    </alternativeName>
</protein>
<accession>A0A3G1DJE9</accession>
<gene>
    <name evidence="10" type="primary">M3</name>
</gene>
<dbReference type="EC" id="1.1.1.-" evidence="12"/>
<dbReference type="EMBL" id="KU946987">
    <property type="protein sequence ID" value="AMY15060.1"/>
    <property type="molecule type" value="Genomic_DNA"/>
</dbReference>
<dbReference type="SMR" id="A0A3G1DJE9"/>
<dbReference type="GO" id="GO:0005829">
    <property type="term" value="C:cytosol"/>
    <property type="evidence" value="ECO:0007669"/>
    <property type="project" value="UniProtKB-SubCell"/>
</dbReference>
<dbReference type="GO" id="GO:0016616">
    <property type="term" value="F:oxidoreductase activity, acting on the CH-OH group of donors, NAD or NADP as acceptor"/>
    <property type="evidence" value="ECO:0007669"/>
    <property type="project" value="TreeGrafter"/>
</dbReference>
<dbReference type="Gene3D" id="3.40.50.720">
    <property type="entry name" value="NAD(P)-binding Rossmann-like Domain"/>
    <property type="match status" value="1"/>
</dbReference>
<dbReference type="InterPro" id="IPR036291">
    <property type="entry name" value="NAD(P)-bd_dom_sf"/>
</dbReference>
<dbReference type="InterPro" id="IPR020904">
    <property type="entry name" value="Sc_DH/Rdtase_CS"/>
</dbReference>
<dbReference type="InterPro" id="IPR002347">
    <property type="entry name" value="SDR_fam"/>
</dbReference>
<dbReference type="PANTHER" id="PTHR44229">
    <property type="entry name" value="15-HYDROXYPROSTAGLANDIN DEHYDROGENASE [NAD(+)]"/>
    <property type="match status" value="1"/>
</dbReference>
<dbReference type="PANTHER" id="PTHR44229:SF4">
    <property type="entry name" value="15-HYDROXYPROSTAGLANDIN DEHYDROGENASE [NAD(+)]"/>
    <property type="match status" value="1"/>
</dbReference>
<dbReference type="Pfam" id="PF00106">
    <property type="entry name" value="adh_short"/>
    <property type="match status" value="1"/>
</dbReference>
<dbReference type="PRINTS" id="PR00081">
    <property type="entry name" value="GDHRDH"/>
</dbReference>
<dbReference type="SUPFAM" id="SSF51735">
    <property type="entry name" value="NAD(P)-binding Rossmann-fold domains"/>
    <property type="match status" value="1"/>
</dbReference>
<dbReference type="PROSITE" id="PS00061">
    <property type="entry name" value="ADH_SHORT"/>
    <property type="match status" value="1"/>
</dbReference>
<organism>
    <name type="scientific">Phoma sp. (strain ATCC 20986 / MF5453)</name>
    <dbReference type="NCBI Taxonomy" id="1828523"/>
    <lineage>
        <taxon>Eukaryota</taxon>
        <taxon>Fungi</taxon>
        <taxon>Dikarya</taxon>
        <taxon>Ascomycota</taxon>
        <taxon>Pezizomycotina</taxon>
        <taxon>Dothideomycetes</taxon>
        <taxon>Pleosporomycetidae</taxon>
        <taxon>Pleosporales</taxon>
        <taxon>Pleosporineae</taxon>
        <taxon>Didymellaceae</taxon>
        <taxon>Phoma</taxon>
    </lineage>
</organism>
<name>MFM3_PHOSM</name>
<feature type="chain" id="PRO_0000447833" description="NADP-dependent dehydrogenase M3">
    <location>
        <begin position="1"/>
        <end position="339"/>
    </location>
</feature>
<feature type="active site" description="Proton acceptor" evidence="5">
    <location>
        <position position="206"/>
    </location>
</feature>
<feature type="active site" description="Lowers pKa of active site Tyr" evidence="3">
    <location>
        <position position="210"/>
    </location>
</feature>
<feature type="binding site" evidence="2">
    <location>
        <position position="49"/>
    </location>
    <ligand>
        <name>NADP(+)</name>
        <dbReference type="ChEBI" id="CHEBI:58349"/>
    </ligand>
</feature>
<feature type="binding site" evidence="2">
    <location>
        <position position="51"/>
    </location>
    <ligand>
        <name>NADP(+)</name>
        <dbReference type="ChEBI" id="CHEBI:58349"/>
    </ligand>
</feature>
<feature type="binding site" evidence="2">
    <location>
        <position position="93"/>
    </location>
    <ligand>
        <name>NADP(+)</name>
        <dbReference type="ChEBI" id="CHEBI:58349"/>
    </ligand>
</feature>
<feature type="binding site" evidence="3">
    <location>
        <position position="206"/>
    </location>
    <ligand>
        <name>NADP(+)</name>
        <dbReference type="ChEBI" id="CHEBI:58349"/>
    </ligand>
</feature>
<feature type="binding site" evidence="3">
    <location>
        <position position="210"/>
    </location>
    <ligand>
        <name>NADP(+)</name>
        <dbReference type="ChEBI" id="CHEBI:58349"/>
    </ligand>
</feature>
<feature type="binding site" evidence="3">
    <location>
        <position position="240"/>
    </location>
    <ligand>
        <name>NADP(+)</name>
        <dbReference type="ChEBI" id="CHEBI:58349"/>
    </ligand>
</feature>
<feature type="binding site" evidence="3">
    <location>
        <position position="244"/>
    </location>
    <ligand>
        <name>NADP(+)</name>
        <dbReference type="ChEBI" id="CHEBI:58349"/>
    </ligand>
</feature>
<proteinExistence type="evidence at transcript level"/>
<reference key="1">
    <citation type="journal article" date="2016" name="Chem. Commun. (Camb.)">
        <title>Identification of genes encoding squalestatin S1 biosynthesis and in vitro production of new squalestatin analogues.</title>
        <authorList>
            <person name="Bonsch B."/>
            <person name="Belt V."/>
            <person name="Bartel C."/>
            <person name="Duensing N."/>
            <person name="Koziol M."/>
            <person name="Lazarus C.M."/>
            <person name="Bailey A.M."/>
            <person name="Simpson T.J."/>
            <person name="Cox R.J."/>
        </authorList>
    </citation>
    <scope>NUCLEOTIDE SEQUENCE [GENOMIC DNA]</scope>
    <scope>FUNCTION</scope>
    <scope>INDUCTION</scope>
</reference>
<reference key="2">
    <citation type="journal article" date="2001" name="Chem. Biol.">
        <title>Design and utility of oligonucleotide gene probes for fungal polyketide synthases.</title>
        <authorList>
            <person name="Nicholson T.P."/>
            <person name="Rudd B.A."/>
            <person name="Dawson M."/>
            <person name="Lazarus C.M."/>
            <person name="Simpson T.J."/>
            <person name="Cox R.J."/>
        </authorList>
    </citation>
    <scope>FUNCTION</scope>
</reference>
<reference key="3">
    <citation type="journal article" date="2004" name="Chem. Commun. (Camb.)">
        <title>Rapid cloning and expression of a fungal polyketide synthase gene involved in squalestatin biosynthesis.</title>
        <authorList>
            <person name="Cox R.J."/>
            <person name="Glod F."/>
            <person name="Hurley D."/>
            <person name="Lazarus C.M."/>
            <person name="Nicholson T.P."/>
            <person name="Rudd B.A."/>
            <person name="Simpson T.J."/>
            <person name="Wilkinson B."/>
            <person name="Zhang Y."/>
        </authorList>
    </citation>
    <scope>FUNCTION</scope>
</reference>
<reference key="4">
    <citation type="journal article" date="2017" name="Chem. Commun. (Camb.)">
        <title>In vitro kinetic study of the squalestatin tetraketide synthase dehydratase reveals the stereochemical course of a fungal highly reducing polyketide synthase.</title>
        <authorList>
            <person name="Liddle E."/>
            <person name="Scott A."/>
            <person name="Han L.C."/>
            <person name="Ivison D."/>
            <person name="Simpson T.J."/>
            <person name="Willis C.L."/>
            <person name="Cox R.J."/>
        </authorList>
    </citation>
    <scope>FUNCTION</scope>
</reference>
<evidence type="ECO:0000250" key="1">
    <source>
        <dbReference type="UniProtKB" id="A0A345BJN5"/>
    </source>
</evidence>
<evidence type="ECO:0000250" key="2">
    <source>
        <dbReference type="UniProtKB" id="L0E2Z4"/>
    </source>
</evidence>
<evidence type="ECO:0000250" key="3">
    <source>
        <dbReference type="UniProtKB" id="O93868"/>
    </source>
</evidence>
<evidence type="ECO:0000250" key="4">
    <source>
        <dbReference type="UniProtKB" id="P87017"/>
    </source>
</evidence>
<evidence type="ECO:0000255" key="5">
    <source>
        <dbReference type="PROSITE-ProRule" id="PRU10001"/>
    </source>
</evidence>
<evidence type="ECO:0000269" key="6">
    <source>
    </source>
</evidence>
<evidence type="ECO:0000269" key="7">
    <source>
    </source>
</evidence>
<evidence type="ECO:0000269" key="8">
    <source>
    </source>
</evidence>
<evidence type="ECO:0000269" key="9">
    <source>
    </source>
</evidence>
<evidence type="ECO:0000303" key="10">
    <source>
    </source>
</evidence>
<evidence type="ECO:0000305" key="11"/>
<evidence type="ECO:0000305" key="12">
    <source>
    </source>
</evidence>